<proteinExistence type="inferred from homology"/>
<protein>
    <recommendedName>
        <fullName evidence="1">Large ribosomal subunit protein uL22</fullName>
    </recommendedName>
    <alternativeName>
        <fullName evidence="2">50S ribosomal protein L22</fullName>
    </alternativeName>
</protein>
<comment type="function">
    <text evidence="1">This protein binds specifically to 23S rRNA; its binding is stimulated by other ribosomal proteins, e.g. L4, L17, and L20. It is important during the early stages of 50S assembly. It makes multiple contacts with different domains of the 23S rRNA in the assembled 50S subunit and ribosome (By similarity).</text>
</comment>
<comment type="function">
    <text evidence="1">The globular domain of the protein is located near the polypeptide exit tunnel on the outside of the subunit, while an extended beta-hairpin is found that lines the wall of the exit tunnel in the center of the 70S ribosome.</text>
</comment>
<comment type="subunit">
    <text evidence="1">Part of the 50S ribosomal subunit.</text>
</comment>
<comment type="similarity">
    <text evidence="1">Belongs to the universal ribosomal protein uL22 family.</text>
</comment>
<feature type="chain" id="PRO_1000214602" description="Large ribosomal subunit protein uL22">
    <location>
        <begin position="1"/>
        <end position="110"/>
    </location>
</feature>
<sequence>METIAKHRHARSSAQKVRLVADLIRGKKVSQALDILTYTNKKAAVLVKKVLESAIANAEHNDGADIDDLKVTKIFVDEGPSMKRIMPRAKGRADRILKRTSHITVVVSDR</sequence>
<organism>
    <name type="scientific">Escherichia coli (strain K12 / MC4100 / BW2952)</name>
    <dbReference type="NCBI Taxonomy" id="595496"/>
    <lineage>
        <taxon>Bacteria</taxon>
        <taxon>Pseudomonadati</taxon>
        <taxon>Pseudomonadota</taxon>
        <taxon>Gammaproteobacteria</taxon>
        <taxon>Enterobacterales</taxon>
        <taxon>Enterobacteriaceae</taxon>
        <taxon>Escherichia</taxon>
    </lineage>
</organism>
<accession>C4ZUH0</accession>
<name>RL22_ECOBW</name>
<reference key="1">
    <citation type="journal article" date="2009" name="J. Bacteriol.">
        <title>Genomic sequencing reveals regulatory mutations and recombinational events in the widely used MC4100 lineage of Escherichia coli K-12.</title>
        <authorList>
            <person name="Ferenci T."/>
            <person name="Zhou Z."/>
            <person name="Betteridge T."/>
            <person name="Ren Y."/>
            <person name="Liu Y."/>
            <person name="Feng L."/>
            <person name="Reeves P.R."/>
            <person name="Wang L."/>
        </authorList>
    </citation>
    <scope>NUCLEOTIDE SEQUENCE [LARGE SCALE GENOMIC DNA]</scope>
    <source>
        <strain>K12 / MC4100 / BW2952</strain>
    </source>
</reference>
<gene>
    <name evidence="1" type="primary">rplV</name>
    <name type="ordered locus">BWG_3006</name>
</gene>
<dbReference type="EMBL" id="CP001396">
    <property type="protein sequence ID" value="ACR61859.1"/>
    <property type="molecule type" value="Genomic_DNA"/>
</dbReference>
<dbReference type="RefSeq" id="WP_000447529.1">
    <property type="nucleotide sequence ID" value="NC_012759.1"/>
</dbReference>
<dbReference type="SMR" id="C4ZUH0"/>
<dbReference type="GeneID" id="93778672"/>
<dbReference type="KEGG" id="ebw:BWG_3006"/>
<dbReference type="HOGENOM" id="CLU_083987_3_3_6"/>
<dbReference type="GO" id="GO:0022625">
    <property type="term" value="C:cytosolic large ribosomal subunit"/>
    <property type="evidence" value="ECO:0007669"/>
    <property type="project" value="TreeGrafter"/>
</dbReference>
<dbReference type="GO" id="GO:0019843">
    <property type="term" value="F:rRNA binding"/>
    <property type="evidence" value="ECO:0007669"/>
    <property type="project" value="UniProtKB-UniRule"/>
</dbReference>
<dbReference type="GO" id="GO:0003735">
    <property type="term" value="F:structural constituent of ribosome"/>
    <property type="evidence" value="ECO:0007669"/>
    <property type="project" value="InterPro"/>
</dbReference>
<dbReference type="GO" id="GO:0006412">
    <property type="term" value="P:translation"/>
    <property type="evidence" value="ECO:0007669"/>
    <property type="project" value="UniProtKB-UniRule"/>
</dbReference>
<dbReference type="CDD" id="cd00336">
    <property type="entry name" value="Ribosomal_L22"/>
    <property type="match status" value="1"/>
</dbReference>
<dbReference type="FunFam" id="3.90.470.10:FF:000001">
    <property type="entry name" value="50S ribosomal protein L22"/>
    <property type="match status" value="1"/>
</dbReference>
<dbReference type="Gene3D" id="3.90.470.10">
    <property type="entry name" value="Ribosomal protein L22/L17"/>
    <property type="match status" value="1"/>
</dbReference>
<dbReference type="HAMAP" id="MF_01331_B">
    <property type="entry name" value="Ribosomal_uL22_B"/>
    <property type="match status" value="1"/>
</dbReference>
<dbReference type="InterPro" id="IPR001063">
    <property type="entry name" value="Ribosomal_uL22"/>
</dbReference>
<dbReference type="InterPro" id="IPR005727">
    <property type="entry name" value="Ribosomal_uL22_bac/chlpt-type"/>
</dbReference>
<dbReference type="InterPro" id="IPR047867">
    <property type="entry name" value="Ribosomal_uL22_bac/org-type"/>
</dbReference>
<dbReference type="InterPro" id="IPR018260">
    <property type="entry name" value="Ribosomal_uL22_CS"/>
</dbReference>
<dbReference type="InterPro" id="IPR036394">
    <property type="entry name" value="Ribosomal_uL22_sf"/>
</dbReference>
<dbReference type="NCBIfam" id="TIGR01044">
    <property type="entry name" value="rplV_bact"/>
    <property type="match status" value="1"/>
</dbReference>
<dbReference type="PANTHER" id="PTHR13501">
    <property type="entry name" value="CHLOROPLAST 50S RIBOSOMAL PROTEIN L22-RELATED"/>
    <property type="match status" value="1"/>
</dbReference>
<dbReference type="PANTHER" id="PTHR13501:SF8">
    <property type="entry name" value="LARGE RIBOSOMAL SUBUNIT PROTEIN UL22M"/>
    <property type="match status" value="1"/>
</dbReference>
<dbReference type="Pfam" id="PF00237">
    <property type="entry name" value="Ribosomal_L22"/>
    <property type="match status" value="1"/>
</dbReference>
<dbReference type="SUPFAM" id="SSF54843">
    <property type="entry name" value="Ribosomal protein L22"/>
    <property type="match status" value="1"/>
</dbReference>
<dbReference type="PROSITE" id="PS00464">
    <property type="entry name" value="RIBOSOMAL_L22"/>
    <property type="match status" value="1"/>
</dbReference>
<evidence type="ECO:0000255" key="1">
    <source>
        <dbReference type="HAMAP-Rule" id="MF_01331"/>
    </source>
</evidence>
<evidence type="ECO:0000305" key="2"/>
<keyword id="KW-0687">Ribonucleoprotein</keyword>
<keyword id="KW-0689">Ribosomal protein</keyword>
<keyword id="KW-0694">RNA-binding</keyword>
<keyword id="KW-0699">rRNA-binding</keyword>